<keyword id="KW-0002">3D-structure</keyword>
<keyword id="KW-0067">ATP-binding</keyword>
<keyword id="KW-0436">Ligase</keyword>
<keyword id="KW-0460">Magnesium</keyword>
<keyword id="KW-0479">Metal-binding</keyword>
<keyword id="KW-0547">Nucleotide-binding</keyword>
<keyword id="KW-1185">Reference proteome</keyword>
<keyword id="KW-0833">Ubl conjugation pathway</keyword>
<comment type="function">
    <text evidence="1 2">Catalyzes the covalent attachment of the prokaryotic ubiquitin-like protein modifier Pup to the proteasomal substrate proteins, thereby targeting them for proteasomal degradation. This tagging system is termed pupylation. The ligation reaction involves the side-chain carboxylate of the C-terminal glutamate of Pup and the side-chain amino group of a substrate lysine.</text>
</comment>
<comment type="catalytic activity">
    <reaction evidence="1 2">
        <text>ATP + [prokaryotic ubiquitin-like protein]-L-glutamate + [protein]-L-lysine = ADP + phosphate + N(6)-([prokaryotic ubiquitin-like protein]-gamma-L-glutamyl)-[protein]-L-lysine.</text>
        <dbReference type="EC" id="6.3.1.19"/>
    </reaction>
</comment>
<comment type="pathway">
    <text evidence="1">Protein degradation; proteasomal Pup-dependent pathway.</text>
</comment>
<comment type="pathway">
    <text evidence="1">Protein modification; protein pupylation.</text>
</comment>
<comment type="subunit">
    <text evidence="2 3">Interacts with the C-terminal half of the prokaryotic ubiquitin-like protein Pup.</text>
</comment>
<comment type="miscellaneous">
    <text evidence="1">The reaction mechanism probably proceeds via the activation of Pup by phosphorylation of its C-terminal glutamate, which is then subject to nucleophilic attack by the substrate lysine, resulting in an isopeptide bond and the release of phosphate as a good leaving group.</text>
</comment>
<comment type="similarity">
    <text evidence="1">Belongs to the Pup ligase/Pup deamidase family. Pup-conjugating enzyme subfamily.</text>
</comment>
<comment type="sequence caution" evidence="4">
    <conflict type="erroneous initiation">
        <sequence resource="EMBL-CDS" id="BAB98887"/>
    </conflict>
    <text>Truncated N-terminus.</text>
</comment>
<proteinExistence type="evidence at protein level"/>
<feature type="chain" id="PRO_0000395908" description="Pup--protein ligase">
    <location>
        <begin position="1"/>
        <end position="482"/>
    </location>
</feature>
<feature type="active site" description="Proton acceptor" evidence="5">
    <location>
        <position position="64"/>
    </location>
</feature>
<feature type="binding site" evidence="1 3">
    <location>
        <position position="16"/>
    </location>
    <ligand>
        <name>Mg(2+)</name>
        <dbReference type="ChEBI" id="CHEBI:18420"/>
    </ligand>
</feature>
<feature type="binding site" evidence="1 3">
    <location>
        <position position="60"/>
    </location>
    <ligand>
        <name>ATP</name>
        <dbReference type="ChEBI" id="CHEBI:30616"/>
    </ligand>
</feature>
<feature type="binding site" evidence="1 3">
    <location>
        <position position="62"/>
    </location>
    <ligand>
        <name>Mg(2+)</name>
        <dbReference type="ChEBI" id="CHEBI:18420"/>
    </ligand>
</feature>
<feature type="binding site" evidence="1 3">
    <location>
        <position position="70"/>
    </location>
    <ligand>
        <name>Mg(2+)</name>
        <dbReference type="ChEBI" id="CHEBI:18420"/>
    </ligand>
</feature>
<feature type="binding site" evidence="1 3">
    <location>
        <position position="73"/>
    </location>
    <ligand>
        <name>ATP</name>
        <dbReference type="ChEBI" id="CHEBI:30616"/>
    </ligand>
</feature>
<feature type="binding site" evidence="1 3">
    <location>
        <position position="440"/>
    </location>
    <ligand>
        <name>ATP</name>
        <dbReference type="ChEBI" id="CHEBI:30616"/>
    </ligand>
</feature>
<feature type="mutagenesis site" description="Abolishes pupylation." evidence="2">
    <original>E</original>
    <variation>A</variation>
    <location>
        <position position="16"/>
    </location>
</feature>
<feature type="mutagenesis site" description="Abolishes pupylation." evidence="2">
    <original>E</original>
    <variation>A</variation>
    <location>
        <position position="18"/>
    </location>
</feature>
<feature type="mutagenesis site" description="Abolishes pupylation." evidence="2">
    <original>R</original>
    <variation>A</variation>
    <location>
        <position position="60"/>
    </location>
</feature>
<feature type="mutagenesis site" description="Abolishes pupylation." evidence="2">
    <original>D</original>
    <variation>N</variation>
    <location>
        <position position="64"/>
    </location>
</feature>
<feature type="mutagenesis site" description="Nearly abolishes pupylation." evidence="2">
    <original>H</original>
    <variation>A</variation>
    <location>
        <position position="68"/>
    </location>
</feature>
<feature type="mutagenesis site" description="Abolishes pupylation." evidence="2">
    <original>H</original>
    <variation>A</variation>
    <location>
        <position position="130"/>
    </location>
</feature>
<feature type="mutagenesis site" description="Reduces pupylation." evidence="2">
    <original>R</original>
    <variation>A</variation>
    <location>
        <position position="199"/>
    </location>
</feature>
<feature type="mutagenesis site" description="Highly reduces pupylation." evidence="2">
    <original>R</original>
    <variation>A</variation>
    <location>
        <position position="201"/>
    </location>
</feature>
<feature type="mutagenesis site" description="Reduces pupylation." evidence="2">
    <original>H</original>
    <variation>A</variation>
    <location>
        <position position="211"/>
    </location>
</feature>
<feature type="mutagenesis site" description="Abolishes pupylation." evidence="2">
    <original>H</original>
    <variation>A</variation>
    <location>
        <position position="221"/>
    </location>
</feature>
<feature type="mutagenesis site" description="Highly reduces pupylation." evidence="3">
    <original>L</original>
    <variation>E</variation>
    <location>
        <position position="354"/>
    </location>
</feature>
<feature type="mutagenesis site" description="Reduces pupylation." evidence="3">
    <original>F</original>
    <variation>E</variation>
    <location>
        <position position="358"/>
    </location>
</feature>
<feature type="mutagenesis site" description="Abolishes pupylation." evidence="2">
    <original>L</original>
    <variation>E</variation>
    <location>
        <position position="376"/>
    </location>
</feature>
<feature type="mutagenesis site" description="Abolishes pupylation." evidence="2">
    <original>W</original>
    <variation>A</variation>
    <location>
        <position position="440"/>
    </location>
</feature>
<feature type="helix" evidence="6">
    <location>
        <begin position="4"/>
        <end position="6"/>
    </location>
</feature>
<feature type="strand" evidence="6">
    <location>
        <begin position="13"/>
        <end position="18"/>
    </location>
</feature>
<feature type="strand" evidence="6">
    <location>
        <begin position="20"/>
        <end position="24"/>
    </location>
</feature>
<feature type="strand" evidence="7">
    <location>
        <begin position="28"/>
        <end position="31"/>
    </location>
</feature>
<feature type="helix" evidence="6">
    <location>
        <begin position="34"/>
        <end position="48"/>
    </location>
</feature>
<feature type="strand" evidence="6">
    <location>
        <begin position="51"/>
        <end position="54"/>
    </location>
</feature>
<feature type="strand" evidence="6">
    <location>
        <begin position="60"/>
        <end position="62"/>
    </location>
</feature>
<feature type="strand" evidence="6">
    <location>
        <begin position="70"/>
        <end position="72"/>
    </location>
</feature>
<feature type="strand" evidence="6">
    <location>
        <begin position="76"/>
        <end position="78"/>
    </location>
</feature>
<feature type="helix" evidence="6">
    <location>
        <begin position="79"/>
        <end position="106"/>
    </location>
</feature>
<feature type="strand" evidence="6">
    <location>
        <begin position="112"/>
        <end position="116"/>
    </location>
</feature>
<feature type="strand" evidence="6">
    <location>
        <begin position="118"/>
        <end position="120"/>
    </location>
</feature>
<feature type="strand" evidence="6">
    <location>
        <begin position="129"/>
        <end position="136"/>
    </location>
</feature>
<feature type="helix" evidence="6">
    <location>
        <begin position="143"/>
        <end position="146"/>
    </location>
</feature>
<feature type="helix" evidence="6">
    <location>
        <begin position="148"/>
        <end position="159"/>
    </location>
</feature>
<feature type="strand" evidence="6">
    <location>
        <begin position="163"/>
        <end position="165"/>
    </location>
</feature>
<feature type="strand" evidence="6">
    <location>
        <begin position="178"/>
        <end position="182"/>
    </location>
</feature>
<feature type="helix" evidence="6">
    <location>
        <begin position="186"/>
        <end position="194"/>
    </location>
</feature>
<feature type="strand" evidence="6">
    <location>
        <begin position="203"/>
        <end position="205"/>
    </location>
</feature>
<feature type="turn" evidence="6">
    <location>
        <begin position="214"/>
        <end position="216"/>
    </location>
</feature>
<feature type="strand" evidence="6">
    <location>
        <begin position="217"/>
        <end position="222"/>
    </location>
</feature>
<feature type="helix" evidence="6">
    <location>
        <begin position="231"/>
        <end position="250"/>
    </location>
</feature>
<feature type="strand" evidence="6">
    <location>
        <begin position="259"/>
        <end position="261"/>
    </location>
</feature>
<feature type="turn" evidence="6">
    <location>
        <begin position="262"/>
        <end position="265"/>
    </location>
</feature>
<feature type="helix" evidence="6">
    <location>
        <begin position="266"/>
        <end position="270"/>
    </location>
</feature>
<feature type="strand" evidence="6">
    <location>
        <begin position="278"/>
        <end position="281"/>
    </location>
</feature>
<feature type="strand" evidence="6">
    <location>
        <begin position="286"/>
        <end position="288"/>
    </location>
</feature>
<feature type="helix" evidence="6">
    <location>
        <begin position="289"/>
        <end position="306"/>
    </location>
</feature>
<feature type="strand" evidence="6">
    <location>
        <begin position="311"/>
        <end position="314"/>
    </location>
</feature>
<feature type="helix" evidence="6">
    <location>
        <begin position="317"/>
        <end position="336"/>
    </location>
</feature>
<feature type="turn" evidence="6">
    <location>
        <begin position="340"/>
        <end position="345"/>
    </location>
</feature>
<feature type="helix" evidence="6">
    <location>
        <begin position="347"/>
        <end position="362"/>
    </location>
</feature>
<feature type="helix" evidence="6">
    <location>
        <begin position="369"/>
        <end position="377"/>
    </location>
</feature>
<feature type="turn" evidence="6">
    <location>
        <begin position="383"/>
        <end position="385"/>
    </location>
</feature>
<feature type="helix" evidence="6">
    <location>
        <begin position="387"/>
        <end position="393"/>
    </location>
</feature>
<feature type="helix" evidence="6">
    <location>
        <begin position="403"/>
        <end position="411"/>
    </location>
</feature>
<feature type="strand" evidence="6">
    <location>
        <begin position="415"/>
        <end position="417"/>
    </location>
</feature>
<feature type="helix" evidence="6">
    <location>
        <begin position="419"/>
        <end position="432"/>
    </location>
</feature>
<feature type="strand" evidence="6">
    <location>
        <begin position="436"/>
        <end position="438"/>
    </location>
</feature>
<feature type="strand" evidence="6">
    <location>
        <begin position="440"/>
        <end position="445"/>
    </location>
</feature>
<feature type="strand" evidence="6">
    <location>
        <begin position="447"/>
        <end position="449"/>
    </location>
</feature>
<feature type="strand" evidence="6">
    <location>
        <begin position="451"/>
        <end position="454"/>
    </location>
</feature>
<feature type="helix" evidence="6">
    <location>
        <begin position="464"/>
        <end position="476"/>
    </location>
</feature>
<protein>
    <recommendedName>
        <fullName evidence="1">Pup--protein ligase</fullName>
        <ecNumber evidence="1 2">6.3.1.19</ecNumber>
    </recommendedName>
    <alternativeName>
        <fullName evidence="1">Proteasome accessory factor A</fullName>
    </alternativeName>
    <alternativeName>
        <fullName evidence="1">Pup-conjugating enzyme</fullName>
    </alternativeName>
</protein>
<organism>
    <name type="scientific">Corynebacterium glutamicum (strain ATCC 13032 / DSM 20300 / JCM 1318 / BCRC 11384 / CCUG 27702 / LMG 3730 / NBRC 12168 / NCIMB 10025 / NRRL B-2784 / 534)</name>
    <dbReference type="NCBI Taxonomy" id="196627"/>
    <lineage>
        <taxon>Bacteria</taxon>
        <taxon>Bacillati</taxon>
        <taxon>Actinomycetota</taxon>
        <taxon>Actinomycetes</taxon>
        <taxon>Mycobacteriales</taxon>
        <taxon>Corynebacteriaceae</taxon>
        <taxon>Corynebacterium</taxon>
    </lineage>
</organism>
<evidence type="ECO:0000255" key="1">
    <source>
        <dbReference type="HAMAP-Rule" id="MF_02111"/>
    </source>
</evidence>
<evidence type="ECO:0000269" key="2">
    <source>
    </source>
</evidence>
<evidence type="ECO:0000269" key="3">
    <source>
    </source>
</evidence>
<evidence type="ECO:0000305" key="4"/>
<evidence type="ECO:0000305" key="5">
    <source>
    </source>
</evidence>
<evidence type="ECO:0007829" key="6">
    <source>
        <dbReference type="PDB" id="4B0T"/>
    </source>
</evidence>
<evidence type="ECO:0007829" key="7">
    <source>
        <dbReference type="PDB" id="4BJR"/>
    </source>
</evidence>
<sequence>MSTVESALTRRIMGIETEYGLTFVDGDSKKLRPDEIARRMFRPIVEKYSSSNIFIPNGSRLYLDVGSHPEYATAECDNLTQLINFEKAGDVIADRMAVDAEESLAKEDIAGQVYLFKNNVDSVGNSYGCHENYLVGRSMPLKALGKRLMPFLITRQLICGAGRIHHPNPLDKGESFPLGYCISQRSDHVWEGVSSATTRSRPIINTRDEPHADSHSYRRLHVIVGDANMAEPSIALKVGSTLLVLEMIEADFGLPSLELANDIASIREISRDATGSTLLSLKDGTTMTALQIQQVVFEHASKWLEQRPEPEFSGTSNTEMARVLDLWGRMLKAIESGDFSEVDTEIDWVIKKKLIDRFIQRGNLGLDDPKLAQVDLTYHDIRPGRGLFSVLQSRGMIKRWTTDEAILAAVDTAPDTTRAHLRGRILKAADTLGVPVTVDWMRHKVNRPEPQSVELGDPFSAVNSEVDQLIEYMTVHAESYRS</sequence>
<gene>
    <name evidence="1" type="primary">pafA</name>
    <name type="ordered locus">Cgl1494</name>
    <name type="ordered locus">cg1688</name>
</gene>
<dbReference type="EC" id="6.3.1.19" evidence="1 2"/>
<dbReference type="EMBL" id="BA000036">
    <property type="protein sequence ID" value="BAB98887.1"/>
    <property type="status" value="ALT_INIT"/>
    <property type="molecule type" value="Genomic_DNA"/>
</dbReference>
<dbReference type="EMBL" id="BX927152">
    <property type="protein sequence ID" value="CAF21502.1"/>
    <property type="molecule type" value="Genomic_DNA"/>
</dbReference>
<dbReference type="RefSeq" id="NP_600710.1">
    <property type="nucleotide sequence ID" value="NC_003450.3"/>
</dbReference>
<dbReference type="PDB" id="4B0T">
    <property type="method" value="X-ray"/>
    <property type="resolution" value="2.16 A"/>
    <property type="chains" value="A/B=1-482"/>
</dbReference>
<dbReference type="PDB" id="4BJR">
    <property type="method" value="X-ray"/>
    <property type="resolution" value="2.80 A"/>
    <property type="chains" value="A/B=2-482"/>
</dbReference>
<dbReference type="PDBsum" id="4B0T"/>
<dbReference type="PDBsum" id="4BJR"/>
<dbReference type="SMR" id="Q8NQE1"/>
<dbReference type="STRING" id="196627.cg1688"/>
<dbReference type="BindingDB" id="Q8NQE1"/>
<dbReference type="ChEMBL" id="CHEMBL5169238"/>
<dbReference type="DNASU" id="3343131"/>
<dbReference type="KEGG" id="cgb:cg1688"/>
<dbReference type="KEGG" id="cgl:Cgl1494"/>
<dbReference type="PATRIC" id="fig|196627.13.peg.1461"/>
<dbReference type="eggNOG" id="COG0638">
    <property type="taxonomic scope" value="Bacteria"/>
</dbReference>
<dbReference type="HOGENOM" id="CLU_040524_0_1_11"/>
<dbReference type="OrthoDB" id="9760627at2"/>
<dbReference type="BioCyc" id="CORYNE:G18NG-11077-MONOMER"/>
<dbReference type="BRENDA" id="3.5.1.119">
    <property type="organism ID" value="960"/>
</dbReference>
<dbReference type="BRENDA" id="6.3.1.19">
    <property type="organism ID" value="960"/>
</dbReference>
<dbReference type="UniPathway" id="UPA00997"/>
<dbReference type="UniPathway" id="UPA00998"/>
<dbReference type="EvolutionaryTrace" id="Q8NQE1"/>
<dbReference type="Proteomes" id="UP000000582">
    <property type="component" value="Chromosome"/>
</dbReference>
<dbReference type="Proteomes" id="UP000001009">
    <property type="component" value="Chromosome"/>
</dbReference>
<dbReference type="GO" id="GO:0005524">
    <property type="term" value="F:ATP binding"/>
    <property type="evidence" value="ECO:0007669"/>
    <property type="project" value="UniProtKB-UniRule"/>
</dbReference>
<dbReference type="GO" id="GO:0016879">
    <property type="term" value="F:ligase activity, forming carbon-nitrogen bonds"/>
    <property type="evidence" value="ECO:0007669"/>
    <property type="project" value="InterPro"/>
</dbReference>
<dbReference type="GO" id="GO:0000287">
    <property type="term" value="F:magnesium ion binding"/>
    <property type="evidence" value="ECO:0007669"/>
    <property type="project" value="UniProtKB-UniRule"/>
</dbReference>
<dbReference type="GO" id="GO:0019787">
    <property type="term" value="F:ubiquitin-like protein transferase activity"/>
    <property type="evidence" value="ECO:0007669"/>
    <property type="project" value="UniProtKB-UniRule"/>
</dbReference>
<dbReference type="GO" id="GO:0019941">
    <property type="term" value="P:modification-dependent protein catabolic process"/>
    <property type="evidence" value="ECO:0007669"/>
    <property type="project" value="UniProtKB-UniRule"/>
</dbReference>
<dbReference type="GO" id="GO:0010498">
    <property type="term" value="P:proteasomal protein catabolic process"/>
    <property type="evidence" value="ECO:0007669"/>
    <property type="project" value="UniProtKB-UniRule"/>
</dbReference>
<dbReference type="GO" id="GO:0070490">
    <property type="term" value="P:protein pupylation"/>
    <property type="evidence" value="ECO:0007669"/>
    <property type="project" value="UniProtKB-UniRule"/>
</dbReference>
<dbReference type="HAMAP" id="MF_02111">
    <property type="entry name" value="Pup_ligase"/>
    <property type="match status" value="1"/>
</dbReference>
<dbReference type="InterPro" id="IPR022279">
    <property type="entry name" value="Pup_ligase"/>
</dbReference>
<dbReference type="InterPro" id="IPR004347">
    <property type="entry name" value="Pup_ligase/deamidase"/>
</dbReference>
<dbReference type="NCBIfam" id="TIGR03686">
    <property type="entry name" value="pupylate_PafA"/>
    <property type="match status" value="1"/>
</dbReference>
<dbReference type="PANTHER" id="PTHR42307">
    <property type="entry name" value="PUP DEAMIDASE/DEPUPYLASE"/>
    <property type="match status" value="1"/>
</dbReference>
<dbReference type="PANTHER" id="PTHR42307:SF3">
    <property type="entry name" value="PUP--PROTEIN LIGASE"/>
    <property type="match status" value="1"/>
</dbReference>
<dbReference type="Pfam" id="PF03136">
    <property type="entry name" value="Pup_ligase"/>
    <property type="match status" value="1"/>
</dbReference>
<dbReference type="PIRSF" id="PIRSF018077">
    <property type="entry name" value="UCP018077"/>
    <property type="match status" value="1"/>
</dbReference>
<reference key="1">
    <citation type="journal article" date="2003" name="Appl. Microbiol. Biotechnol.">
        <title>The Corynebacterium glutamicum genome: features and impacts on biotechnological processes.</title>
        <authorList>
            <person name="Ikeda M."/>
            <person name="Nakagawa S."/>
        </authorList>
    </citation>
    <scope>NUCLEOTIDE SEQUENCE [LARGE SCALE GENOMIC DNA]</scope>
    <source>
        <strain>ATCC 13032 / DSM 20300 / JCM 1318 / BCRC 11384 / CCUG 27702 / LMG 3730 / NBRC 12168 / NCIMB 10025 / NRRL B-2784 / 534</strain>
    </source>
</reference>
<reference key="2">
    <citation type="journal article" date="2003" name="J. Biotechnol.">
        <title>The complete Corynebacterium glutamicum ATCC 13032 genome sequence and its impact on the production of L-aspartate-derived amino acids and vitamins.</title>
        <authorList>
            <person name="Kalinowski J."/>
            <person name="Bathe B."/>
            <person name="Bartels D."/>
            <person name="Bischoff N."/>
            <person name="Bott M."/>
            <person name="Burkovski A."/>
            <person name="Dusch N."/>
            <person name="Eggeling L."/>
            <person name="Eikmanns B.J."/>
            <person name="Gaigalat L."/>
            <person name="Goesmann A."/>
            <person name="Hartmann M."/>
            <person name="Huthmacher K."/>
            <person name="Kraemer R."/>
            <person name="Linke B."/>
            <person name="McHardy A.C."/>
            <person name="Meyer F."/>
            <person name="Moeckel B."/>
            <person name="Pfefferle W."/>
            <person name="Puehler A."/>
            <person name="Rey D.A."/>
            <person name="Rueckert C."/>
            <person name="Rupp O."/>
            <person name="Sahm H."/>
            <person name="Wendisch V.F."/>
            <person name="Wiegraebe I."/>
            <person name="Tauch A."/>
        </authorList>
    </citation>
    <scope>NUCLEOTIDE SEQUENCE [LARGE SCALE GENOMIC DNA]</scope>
    <source>
        <strain>ATCC 13032 / DSM 20300 / JCM 1318 / BCRC 11384 / CCUG 27702 / LMG 3730 / NBRC 12168 / NCIMB 10025 / NRRL B-2784 / 534</strain>
    </source>
</reference>
<reference key="3">
    <citation type="journal article" date="2012" name="Nat. Commun.">
        <title>Structures of Pup ligase PafA and depupylase Dop from the prokaryotic ubiquitin-like modification pathway.</title>
        <authorList>
            <person name="Ozcelik D."/>
            <person name="Barandun J."/>
            <person name="Schmitz N."/>
            <person name="Sutter M."/>
            <person name="Guth E."/>
            <person name="Damberger F.F."/>
            <person name="Allain F.H."/>
            <person name="Ban N."/>
            <person name="Weber-Ban E."/>
        </authorList>
    </citation>
    <scope>X-RAY CRYSTALLOGRAPHY (2.16 ANGSTROMS) IN COMPLEX WITH ADP</scope>
    <scope>FUNCTION</scope>
    <scope>CATALYTIC ACTIVITY</scope>
    <scope>ACTIVE SITE</scope>
    <scope>MUTAGENESIS OF GLU-16; GLU-18; ARG-60; ASP-64; HIS-68; HIS-130; ARG-199; ARG-201; HIS-211; HIS-221; LEU-376 AND TRP-440</scope>
    <source>
        <strain>ATCC 13032 / DSM 20300 / JCM 1318 / BCRC 11384 / CCUG 27702 / LMG 3730 / NBRC 12168 / NCIMB 10025 / NRRL B-2784 / 534</strain>
    </source>
</reference>
<reference key="4">
    <citation type="journal article" date="2013" name="J. Am. Chem. Soc.">
        <title>Crystal structure of the complex between prokaryotic ubiquitin-like protein and its ligase PafA.</title>
        <authorList>
            <person name="Barandun J."/>
            <person name="Delley C.L."/>
            <person name="Ban N."/>
            <person name="Weber-Ban E."/>
        </authorList>
    </citation>
    <scope>X-RAY CRYSTALLOGRAPHY (2.8 ANGSTROMS) IN COMPLEX WITH PROTEIN PUP; ATP AND MAGNESIUM</scope>
    <scope>INTERACTION WITH PUP</scope>
    <scope>MUTAGENESIS OF LEU-354 AND PHE-358</scope>
    <source>
        <strain>ATCC 13032 / DSM 20300 / JCM 1318 / BCRC 11384 / CCUG 27702 / LMG 3730 / NBRC 12168 / NCIMB 10025 / NRRL B-2784 / 534</strain>
    </source>
</reference>
<accession>Q8NQE1</accession>
<accession>Q6M590</accession>
<name>PAFA_CORGL</name>